<protein>
    <recommendedName>
        <fullName>ADP-ribosylation factor-like protein 6-interacting protein 6</fullName>
        <shortName>ARL-6-interacting protein 6</shortName>
        <shortName>Aip-6</shortName>
    </recommendedName>
</protein>
<proteinExistence type="evidence at transcript level"/>
<reference key="1">
    <citation type="submission" date="2005-09" db="EMBL/GenBank/DDBJ databases">
        <authorList>
            <consortium name="NIH - Mammalian Gene Collection (MGC) project"/>
        </authorList>
    </citation>
    <scope>NUCLEOTIDE SEQUENCE [LARGE SCALE MRNA]</scope>
    <source>
        <strain>Crossbred X Angus</strain>
        <tissue>Ileum</tissue>
    </source>
</reference>
<sequence length="226" mass="24657">MSFVESGRRSAPLRRRPGTPVPFARPAYSVFSQGDSWGEGEVEEEEGCDQVARDLRAEFSAGSSSKLRKDPVLQPDGDGSPVLPDKRNGIFSADAGGKALARRWPVQVLSILCSLLFAILLACLLAITYLIVKELHAENLKNEDDVNTGLLGFWSLLIISLTAGFSCCSFSWTVTYFDSFEPGMFPPTPLSPARFKKMTGHSFHMGYSMAILNGIVAALTVAWCLM</sequence>
<gene>
    <name type="primary">ARL6IP6</name>
</gene>
<dbReference type="EMBL" id="BC105178">
    <property type="protein sequence ID" value="AAI05179.1"/>
    <property type="molecule type" value="mRNA"/>
</dbReference>
<dbReference type="RefSeq" id="NP_001029453.1">
    <property type="nucleotide sequence ID" value="NM_001034281.2"/>
</dbReference>
<dbReference type="FunCoup" id="Q3MHM8">
    <property type="interactions" value="2269"/>
</dbReference>
<dbReference type="STRING" id="9913.ENSBTAP00000001883"/>
<dbReference type="PaxDb" id="9913-ENSBTAP00000001883"/>
<dbReference type="Ensembl" id="ENSBTAT00000001883.6">
    <property type="protein sequence ID" value="ENSBTAP00000001883.5"/>
    <property type="gene ID" value="ENSBTAG00000001435.7"/>
</dbReference>
<dbReference type="GeneID" id="507137"/>
<dbReference type="KEGG" id="bta:507137"/>
<dbReference type="CTD" id="151188"/>
<dbReference type="VEuPathDB" id="HostDB:ENSBTAG00000001435"/>
<dbReference type="VGNC" id="VGNC:26152">
    <property type="gene designation" value="ARL6IP6"/>
</dbReference>
<dbReference type="eggNOG" id="ENOG502S00H">
    <property type="taxonomic scope" value="Eukaryota"/>
</dbReference>
<dbReference type="GeneTree" id="ENSGT00390000009987"/>
<dbReference type="HOGENOM" id="CLU_1229535_0_0_1"/>
<dbReference type="InParanoid" id="Q3MHM8"/>
<dbReference type="OMA" id="TVAWCLL"/>
<dbReference type="OrthoDB" id="10070125at2759"/>
<dbReference type="TreeFam" id="TF324669"/>
<dbReference type="Proteomes" id="UP000009136">
    <property type="component" value="Chromosome 2"/>
</dbReference>
<dbReference type="Bgee" id="ENSBTAG00000001435">
    <property type="expression patterns" value="Expressed in spermatocyte and 105 other cell types or tissues"/>
</dbReference>
<dbReference type="GO" id="GO:0005637">
    <property type="term" value="C:nuclear inner membrane"/>
    <property type="evidence" value="ECO:0000250"/>
    <property type="project" value="UniProtKB"/>
</dbReference>
<dbReference type="InterPro" id="IPR029383">
    <property type="entry name" value="ARL6IP6"/>
</dbReference>
<dbReference type="PANTHER" id="PTHR28640">
    <property type="entry name" value="ADP-RIBOSYLATION FACTOR-LIKE PROTEIN 6-INTERACTING PROTEIN 6"/>
    <property type="match status" value="1"/>
</dbReference>
<dbReference type="PANTHER" id="PTHR28640:SF1">
    <property type="entry name" value="ADP-RIBOSYLATION FACTOR-LIKE PROTEIN 6-INTERACTING PROTEIN 6"/>
    <property type="match status" value="1"/>
</dbReference>
<dbReference type="Pfam" id="PF15062">
    <property type="entry name" value="ARL6IP6"/>
    <property type="match status" value="1"/>
</dbReference>
<accession>Q3MHM8</accession>
<keyword id="KW-0472">Membrane</keyword>
<keyword id="KW-0539">Nucleus</keyword>
<keyword id="KW-0597">Phosphoprotein</keyword>
<keyword id="KW-1185">Reference proteome</keyword>
<keyword id="KW-0812">Transmembrane</keyword>
<keyword id="KW-1133">Transmembrane helix</keyword>
<name>AR6P6_BOVIN</name>
<organism>
    <name type="scientific">Bos taurus</name>
    <name type="common">Bovine</name>
    <dbReference type="NCBI Taxonomy" id="9913"/>
    <lineage>
        <taxon>Eukaryota</taxon>
        <taxon>Metazoa</taxon>
        <taxon>Chordata</taxon>
        <taxon>Craniata</taxon>
        <taxon>Vertebrata</taxon>
        <taxon>Euteleostomi</taxon>
        <taxon>Mammalia</taxon>
        <taxon>Eutheria</taxon>
        <taxon>Laurasiatheria</taxon>
        <taxon>Artiodactyla</taxon>
        <taxon>Ruminantia</taxon>
        <taxon>Pecora</taxon>
        <taxon>Bovidae</taxon>
        <taxon>Bovinae</taxon>
        <taxon>Bos</taxon>
    </lineage>
</organism>
<evidence type="ECO:0000250" key="1">
    <source>
        <dbReference type="UniProtKB" id="Q8BH07"/>
    </source>
</evidence>
<evidence type="ECO:0000250" key="2">
    <source>
        <dbReference type="UniProtKB" id="Q8N6S5"/>
    </source>
</evidence>
<evidence type="ECO:0000255" key="3"/>
<evidence type="ECO:0000256" key="4">
    <source>
        <dbReference type="SAM" id="MobiDB-lite"/>
    </source>
</evidence>
<evidence type="ECO:0000305" key="5"/>
<feature type="chain" id="PRO_0000307323" description="ADP-ribosylation factor-like protein 6-interacting protein 6">
    <location>
        <begin position="1"/>
        <end position="226"/>
    </location>
</feature>
<feature type="transmembrane region" description="Helical" evidence="3">
    <location>
        <begin position="111"/>
        <end position="131"/>
    </location>
</feature>
<feature type="transmembrane region" description="Helical" evidence="3">
    <location>
        <begin position="150"/>
        <end position="170"/>
    </location>
</feature>
<feature type="transmembrane region" description="Helical" evidence="3">
    <location>
        <begin position="205"/>
        <end position="225"/>
    </location>
</feature>
<feature type="region of interest" description="Disordered" evidence="4">
    <location>
        <begin position="1"/>
        <end position="26"/>
    </location>
</feature>
<feature type="region of interest" description="Disordered" evidence="4">
    <location>
        <begin position="62"/>
        <end position="81"/>
    </location>
</feature>
<feature type="modified residue" description="Phosphoserine" evidence="2">
    <location>
        <position position="2"/>
    </location>
</feature>
<feature type="modified residue" description="Phosphoserine" evidence="2">
    <location>
        <position position="36"/>
    </location>
</feature>
<feature type="modified residue" description="Phosphoserine" evidence="2">
    <location>
        <position position="60"/>
    </location>
</feature>
<feature type="modified residue" description="Phosphoserine" evidence="2">
    <location>
        <position position="65"/>
    </location>
</feature>
<feature type="modified residue" description="Phosphoserine" evidence="2">
    <location>
        <position position="80"/>
    </location>
</feature>
<comment type="subcellular location">
    <subcellularLocation>
        <location evidence="1">Nucleus inner membrane</location>
        <topology evidence="3">Multi-pass membrane protein</topology>
    </subcellularLocation>
</comment>
<comment type="similarity">
    <text evidence="5">Belongs to the ARL6IP6 family.</text>
</comment>